<reference key="1">
    <citation type="journal article" date="2007" name="Appl. Environ. Microbiol.">
        <title>Genome sequence of the cellulolytic gliding bacterium Cytophaga hutchinsonii.</title>
        <authorList>
            <person name="Xie G."/>
            <person name="Bruce D.C."/>
            <person name="Challacombe J.F."/>
            <person name="Chertkov O."/>
            <person name="Detter J.C."/>
            <person name="Gilna P."/>
            <person name="Han C.S."/>
            <person name="Lucas S."/>
            <person name="Misra M."/>
            <person name="Myers G.L."/>
            <person name="Richardson P."/>
            <person name="Tapia R."/>
            <person name="Thayer N."/>
            <person name="Thompson L.S."/>
            <person name="Brettin T.S."/>
            <person name="Henrissat B."/>
            <person name="Wilson D.B."/>
            <person name="McBride M.J."/>
        </authorList>
    </citation>
    <scope>NUCLEOTIDE SEQUENCE [LARGE SCALE GENOMIC DNA]</scope>
    <source>
        <strain>ATCC 33406 / DSM 1761 / JCM 20678 / CIP 103989 / IAM 12607 / NBRC 15051 / NCIMB 9469 / D465</strain>
    </source>
</reference>
<dbReference type="EC" id="2.7.4.22" evidence="1"/>
<dbReference type="EMBL" id="CP000383">
    <property type="protein sequence ID" value="ABG57864.1"/>
    <property type="molecule type" value="Genomic_DNA"/>
</dbReference>
<dbReference type="RefSeq" id="WP_011583980.1">
    <property type="nucleotide sequence ID" value="NC_008255.1"/>
</dbReference>
<dbReference type="SMR" id="Q11XK2"/>
<dbReference type="STRING" id="269798.CHU_0577"/>
<dbReference type="KEGG" id="chu:CHU_0577"/>
<dbReference type="eggNOG" id="COG0528">
    <property type="taxonomic scope" value="Bacteria"/>
</dbReference>
<dbReference type="HOGENOM" id="CLU_033861_0_0_10"/>
<dbReference type="OrthoDB" id="9807458at2"/>
<dbReference type="UniPathway" id="UPA00159">
    <property type="reaction ID" value="UER00275"/>
</dbReference>
<dbReference type="Proteomes" id="UP000001822">
    <property type="component" value="Chromosome"/>
</dbReference>
<dbReference type="GO" id="GO:0005737">
    <property type="term" value="C:cytoplasm"/>
    <property type="evidence" value="ECO:0007669"/>
    <property type="project" value="UniProtKB-SubCell"/>
</dbReference>
<dbReference type="GO" id="GO:0005524">
    <property type="term" value="F:ATP binding"/>
    <property type="evidence" value="ECO:0007669"/>
    <property type="project" value="UniProtKB-KW"/>
</dbReference>
<dbReference type="GO" id="GO:0033862">
    <property type="term" value="F:UMP kinase activity"/>
    <property type="evidence" value="ECO:0007669"/>
    <property type="project" value="UniProtKB-EC"/>
</dbReference>
<dbReference type="GO" id="GO:0044210">
    <property type="term" value="P:'de novo' CTP biosynthetic process"/>
    <property type="evidence" value="ECO:0007669"/>
    <property type="project" value="UniProtKB-UniRule"/>
</dbReference>
<dbReference type="GO" id="GO:0006225">
    <property type="term" value="P:UDP biosynthetic process"/>
    <property type="evidence" value="ECO:0007669"/>
    <property type="project" value="TreeGrafter"/>
</dbReference>
<dbReference type="CDD" id="cd04254">
    <property type="entry name" value="AAK_UMPK-PyrH-Ec"/>
    <property type="match status" value="1"/>
</dbReference>
<dbReference type="FunFam" id="3.40.1160.10:FF:000001">
    <property type="entry name" value="Uridylate kinase"/>
    <property type="match status" value="1"/>
</dbReference>
<dbReference type="Gene3D" id="3.40.1160.10">
    <property type="entry name" value="Acetylglutamate kinase-like"/>
    <property type="match status" value="1"/>
</dbReference>
<dbReference type="HAMAP" id="MF_01220_B">
    <property type="entry name" value="PyrH_B"/>
    <property type="match status" value="1"/>
</dbReference>
<dbReference type="InterPro" id="IPR036393">
    <property type="entry name" value="AceGlu_kinase-like_sf"/>
</dbReference>
<dbReference type="InterPro" id="IPR001048">
    <property type="entry name" value="Asp/Glu/Uridylate_kinase"/>
</dbReference>
<dbReference type="InterPro" id="IPR011817">
    <property type="entry name" value="Uridylate_kinase"/>
</dbReference>
<dbReference type="InterPro" id="IPR015963">
    <property type="entry name" value="Uridylate_kinase_bac"/>
</dbReference>
<dbReference type="NCBIfam" id="TIGR02075">
    <property type="entry name" value="pyrH_bact"/>
    <property type="match status" value="1"/>
</dbReference>
<dbReference type="PANTHER" id="PTHR42833">
    <property type="entry name" value="URIDYLATE KINASE"/>
    <property type="match status" value="1"/>
</dbReference>
<dbReference type="PANTHER" id="PTHR42833:SF4">
    <property type="entry name" value="URIDYLATE KINASE PUMPKIN, CHLOROPLASTIC"/>
    <property type="match status" value="1"/>
</dbReference>
<dbReference type="Pfam" id="PF00696">
    <property type="entry name" value="AA_kinase"/>
    <property type="match status" value="1"/>
</dbReference>
<dbReference type="PIRSF" id="PIRSF005650">
    <property type="entry name" value="Uridylate_kin"/>
    <property type="match status" value="1"/>
</dbReference>
<dbReference type="SUPFAM" id="SSF53633">
    <property type="entry name" value="Carbamate kinase-like"/>
    <property type="match status" value="1"/>
</dbReference>
<accession>Q11XK2</accession>
<protein>
    <recommendedName>
        <fullName evidence="1">Uridylate kinase</fullName>
        <shortName evidence="1">UK</shortName>
        <ecNumber evidence="1">2.7.4.22</ecNumber>
    </recommendedName>
    <alternativeName>
        <fullName evidence="1">Uridine monophosphate kinase</fullName>
        <shortName evidence="1">UMP kinase</shortName>
        <shortName evidence="1">UMPK</shortName>
    </alternativeName>
</protein>
<keyword id="KW-0067">ATP-binding</keyword>
<keyword id="KW-0963">Cytoplasm</keyword>
<keyword id="KW-0418">Kinase</keyword>
<keyword id="KW-0547">Nucleotide-binding</keyword>
<keyword id="KW-0665">Pyrimidine biosynthesis</keyword>
<keyword id="KW-1185">Reference proteome</keyword>
<keyword id="KW-0808">Transferase</keyword>
<evidence type="ECO:0000255" key="1">
    <source>
        <dbReference type="HAMAP-Rule" id="MF_01220"/>
    </source>
</evidence>
<name>PYRH_CYTH3</name>
<proteinExistence type="inferred from homology"/>
<feature type="chain" id="PRO_0000323831" description="Uridylate kinase">
    <location>
        <begin position="1"/>
        <end position="235"/>
    </location>
</feature>
<feature type="binding site" evidence="1">
    <location>
        <begin position="9"/>
        <end position="12"/>
    </location>
    <ligand>
        <name>ATP</name>
        <dbReference type="ChEBI" id="CHEBI:30616"/>
    </ligand>
</feature>
<feature type="binding site" evidence="1">
    <location>
        <position position="51"/>
    </location>
    <ligand>
        <name>UMP</name>
        <dbReference type="ChEBI" id="CHEBI:57865"/>
    </ligand>
</feature>
<feature type="binding site" evidence="1">
    <location>
        <position position="52"/>
    </location>
    <ligand>
        <name>ATP</name>
        <dbReference type="ChEBI" id="CHEBI:30616"/>
    </ligand>
</feature>
<feature type="binding site" evidence="1">
    <location>
        <position position="56"/>
    </location>
    <ligand>
        <name>ATP</name>
        <dbReference type="ChEBI" id="CHEBI:30616"/>
    </ligand>
</feature>
<feature type="binding site" evidence="1">
    <location>
        <position position="71"/>
    </location>
    <ligand>
        <name>UMP</name>
        <dbReference type="ChEBI" id="CHEBI:57865"/>
    </ligand>
</feature>
<feature type="binding site" evidence="1">
    <location>
        <begin position="132"/>
        <end position="139"/>
    </location>
    <ligand>
        <name>UMP</name>
        <dbReference type="ChEBI" id="CHEBI:57865"/>
    </ligand>
</feature>
<feature type="binding site" evidence="1">
    <location>
        <position position="159"/>
    </location>
    <ligand>
        <name>ATP</name>
        <dbReference type="ChEBI" id="CHEBI:30616"/>
    </ligand>
</feature>
<feature type="binding site" evidence="1">
    <location>
        <position position="165"/>
    </location>
    <ligand>
        <name>ATP</name>
        <dbReference type="ChEBI" id="CHEBI:30616"/>
    </ligand>
</feature>
<feature type="binding site" evidence="1">
    <location>
        <position position="168"/>
    </location>
    <ligand>
        <name>ATP</name>
        <dbReference type="ChEBI" id="CHEBI:30616"/>
    </ligand>
</feature>
<organism>
    <name type="scientific">Cytophaga hutchinsonii (strain ATCC 33406 / DSM 1761 / CIP 103989 / NBRC 15051 / NCIMB 9469 / D465)</name>
    <dbReference type="NCBI Taxonomy" id="269798"/>
    <lineage>
        <taxon>Bacteria</taxon>
        <taxon>Pseudomonadati</taxon>
        <taxon>Bacteroidota</taxon>
        <taxon>Cytophagia</taxon>
        <taxon>Cytophagales</taxon>
        <taxon>Cytophagaceae</taxon>
        <taxon>Cytophaga</taxon>
    </lineage>
</organism>
<gene>
    <name evidence="1" type="primary">pyrH</name>
    <name type="ordered locus">CHU_0577</name>
</gene>
<comment type="function">
    <text evidence="1">Catalyzes the reversible phosphorylation of UMP to UDP.</text>
</comment>
<comment type="catalytic activity">
    <reaction evidence="1">
        <text>UMP + ATP = UDP + ADP</text>
        <dbReference type="Rhea" id="RHEA:24400"/>
        <dbReference type="ChEBI" id="CHEBI:30616"/>
        <dbReference type="ChEBI" id="CHEBI:57865"/>
        <dbReference type="ChEBI" id="CHEBI:58223"/>
        <dbReference type="ChEBI" id="CHEBI:456216"/>
        <dbReference type="EC" id="2.7.4.22"/>
    </reaction>
</comment>
<comment type="activity regulation">
    <text evidence="1">Inhibited by UTP.</text>
</comment>
<comment type="pathway">
    <text evidence="1">Pyrimidine metabolism; CTP biosynthesis via de novo pathway; UDP from UMP (UMPK route): step 1/1.</text>
</comment>
<comment type="subunit">
    <text evidence="1">Homohexamer.</text>
</comment>
<comment type="subcellular location">
    <subcellularLocation>
        <location evidence="1">Cytoplasm</location>
    </subcellularLocation>
</comment>
<comment type="similarity">
    <text evidence="1">Belongs to the UMP kinase family.</text>
</comment>
<sequence>MKYKRILLKLSGEALMGEQKYGIDSQVLIRYANEIKAIADKGVEITIVVGGGNIYRGIEAAATGIDRVQGDYMGMLATVINCMALQSALENIGLDTRLMSGIKIEQVCESFIRRRAIRHLEKGRIVMFGAGTGNPYFTTDTAASLRAIEIEAEVVLKGTRVDGVYTADPEKDPTATRYTTITFDEAYAKGLNIMDMTAFTLCKENELPIIIFDMNRPGNLLKVLEGESVGTLVKL</sequence>